<reference key="1">
    <citation type="submission" date="2009-07" db="EMBL/GenBank/DDBJ databases">
        <title>Complete sequence of Pectobacterium carotovorum subsp. carotovorum PC1.</title>
        <authorList>
            <consortium name="US DOE Joint Genome Institute"/>
            <person name="Lucas S."/>
            <person name="Copeland A."/>
            <person name="Lapidus A."/>
            <person name="Glavina del Rio T."/>
            <person name="Tice H."/>
            <person name="Bruce D."/>
            <person name="Goodwin L."/>
            <person name="Pitluck S."/>
            <person name="Munk A.C."/>
            <person name="Brettin T."/>
            <person name="Detter J.C."/>
            <person name="Han C."/>
            <person name="Tapia R."/>
            <person name="Larimer F."/>
            <person name="Land M."/>
            <person name="Hauser L."/>
            <person name="Kyrpides N."/>
            <person name="Mikhailova N."/>
            <person name="Balakrishnan V."/>
            <person name="Glasner J."/>
            <person name="Perna N.T."/>
        </authorList>
    </citation>
    <scope>NUCLEOTIDE SEQUENCE [LARGE SCALE GENOMIC DNA]</scope>
    <source>
        <strain>PC1</strain>
    </source>
</reference>
<evidence type="ECO:0000255" key="1">
    <source>
        <dbReference type="HAMAP-Rule" id="MF_01350"/>
    </source>
</evidence>
<keyword id="KW-0997">Cell inner membrane</keyword>
<keyword id="KW-1003">Cell membrane</keyword>
<keyword id="KW-0472">Membrane</keyword>
<keyword id="KW-0520">NAD</keyword>
<keyword id="KW-0874">Quinone</keyword>
<keyword id="KW-1278">Translocase</keyword>
<keyword id="KW-0812">Transmembrane</keyword>
<keyword id="KW-1133">Transmembrane helix</keyword>
<keyword id="KW-0830">Ubiquinone</keyword>
<name>NUOH_PECCP</name>
<comment type="function">
    <text evidence="1">NDH-1 shuttles electrons from NADH, via FMN and iron-sulfur (Fe-S) centers, to quinones in the respiratory chain. The immediate electron acceptor for the enzyme in this species is believed to be ubiquinone. Couples the redox reaction to proton translocation (for every two electrons transferred, four hydrogen ions are translocated across the cytoplasmic membrane), and thus conserves the redox energy in a proton gradient. This subunit may bind ubiquinone.</text>
</comment>
<comment type="catalytic activity">
    <reaction evidence="1">
        <text>a quinone + NADH + 5 H(+)(in) = a quinol + NAD(+) + 4 H(+)(out)</text>
        <dbReference type="Rhea" id="RHEA:57888"/>
        <dbReference type="ChEBI" id="CHEBI:15378"/>
        <dbReference type="ChEBI" id="CHEBI:24646"/>
        <dbReference type="ChEBI" id="CHEBI:57540"/>
        <dbReference type="ChEBI" id="CHEBI:57945"/>
        <dbReference type="ChEBI" id="CHEBI:132124"/>
    </reaction>
</comment>
<comment type="subunit">
    <text evidence="1">NDH-1 is composed of 13 different subunits. Subunits NuoA, H, J, K, L, M, N constitute the membrane sector of the complex.</text>
</comment>
<comment type="subcellular location">
    <subcellularLocation>
        <location evidence="1">Cell inner membrane</location>
        <topology evidence="1">Multi-pass membrane protein</topology>
    </subcellularLocation>
</comment>
<comment type="similarity">
    <text evidence="1">Belongs to the complex I subunit 1 family.</text>
</comment>
<proteinExistence type="inferred from homology"/>
<accession>C6DA40</accession>
<feature type="chain" id="PRO_1000214842" description="NADH-quinone oxidoreductase subunit H">
    <location>
        <begin position="1"/>
        <end position="324"/>
    </location>
</feature>
<feature type="transmembrane region" description="Helical" evidence="1">
    <location>
        <begin position="11"/>
        <end position="31"/>
    </location>
</feature>
<feature type="transmembrane region" description="Helical" evidence="1">
    <location>
        <begin position="81"/>
        <end position="101"/>
    </location>
</feature>
<feature type="transmembrane region" description="Helical" evidence="1">
    <location>
        <begin position="114"/>
        <end position="134"/>
    </location>
</feature>
<feature type="transmembrane region" description="Helical" evidence="1">
    <location>
        <begin position="154"/>
        <end position="174"/>
    </location>
</feature>
<feature type="transmembrane region" description="Helical" evidence="1">
    <location>
        <begin position="186"/>
        <end position="206"/>
    </location>
</feature>
<feature type="transmembrane region" description="Helical" evidence="1">
    <location>
        <begin position="237"/>
        <end position="257"/>
    </location>
</feature>
<feature type="transmembrane region" description="Helical" evidence="1">
    <location>
        <begin position="264"/>
        <end position="284"/>
    </location>
</feature>
<feature type="transmembrane region" description="Helical" evidence="1">
    <location>
        <begin position="304"/>
        <end position="324"/>
    </location>
</feature>
<organism>
    <name type="scientific">Pectobacterium carotovorum subsp. carotovorum (strain PC1)</name>
    <dbReference type="NCBI Taxonomy" id="561230"/>
    <lineage>
        <taxon>Bacteria</taxon>
        <taxon>Pseudomonadati</taxon>
        <taxon>Pseudomonadota</taxon>
        <taxon>Gammaproteobacteria</taxon>
        <taxon>Enterobacterales</taxon>
        <taxon>Pectobacteriaceae</taxon>
        <taxon>Pectobacterium</taxon>
    </lineage>
</organism>
<gene>
    <name evidence="1" type="primary">nuoH</name>
    <name type="ordered locus">PC1_2766</name>
</gene>
<protein>
    <recommendedName>
        <fullName evidence="1">NADH-quinone oxidoreductase subunit H</fullName>
        <ecNumber evidence="1">7.1.1.-</ecNumber>
    </recommendedName>
    <alternativeName>
        <fullName evidence="1">NADH dehydrogenase I subunit H</fullName>
    </alternativeName>
    <alternativeName>
        <fullName evidence="1">NDH-1 subunit H</fullName>
    </alternativeName>
</protein>
<dbReference type="EC" id="7.1.1.-" evidence="1"/>
<dbReference type="EMBL" id="CP001657">
    <property type="protein sequence ID" value="ACT13796.1"/>
    <property type="molecule type" value="Genomic_DNA"/>
</dbReference>
<dbReference type="RefSeq" id="WP_015840962.1">
    <property type="nucleotide sequence ID" value="NC_012917.1"/>
</dbReference>
<dbReference type="SMR" id="C6DA40"/>
<dbReference type="STRING" id="561230.PC1_2766"/>
<dbReference type="GeneID" id="67793347"/>
<dbReference type="KEGG" id="pct:PC1_2766"/>
<dbReference type="eggNOG" id="COG1005">
    <property type="taxonomic scope" value="Bacteria"/>
</dbReference>
<dbReference type="HOGENOM" id="CLU_015134_0_1_6"/>
<dbReference type="OrthoDB" id="9803734at2"/>
<dbReference type="Proteomes" id="UP000002736">
    <property type="component" value="Chromosome"/>
</dbReference>
<dbReference type="GO" id="GO:0005886">
    <property type="term" value="C:plasma membrane"/>
    <property type="evidence" value="ECO:0007669"/>
    <property type="project" value="UniProtKB-SubCell"/>
</dbReference>
<dbReference type="GO" id="GO:0003954">
    <property type="term" value="F:NADH dehydrogenase activity"/>
    <property type="evidence" value="ECO:0007669"/>
    <property type="project" value="TreeGrafter"/>
</dbReference>
<dbReference type="GO" id="GO:0016655">
    <property type="term" value="F:oxidoreductase activity, acting on NAD(P)H, quinone or similar compound as acceptor"/>
    <property type="evidence" value="ECO:0007669"/>
    <property type="project" value="UniProtKB-UniRule"/>
</dbReference>
<dbReference type="GO" id="GO:0048038">
    <property type="term" value="F:quinone binding"/>
    <property type="evidence" value="ECO:0007669"/>
    <property type="project" value="UniProtKB-KW"/>
</dbReference>
<dbReference type="GO" id="GO:0009060">
    <property type="term" value="P:aerobic respiration"/>
    <property type="evidence" value="ECO:0007669"/>
    <property type="project" value="TreeGrafter"/>
</dbReference>
<dbReference type="HAMAP" id="MF_01350">
    <property type="entry name" value="NDH1_NuoH"/>
    <property type="match status" value="1"/>
</dbReference>
<dbReference type="InterPro" id="IPR001694">
    <property type="entry name" value="NADH_UbQ_OxRdtase_su1/FPO"/>
</dbReference>
<dbReference type="InterPro" id="IPR018086">
    <property type="entry name" value="NADH_UbQ_OxRdtase_su1_CS"/>
</dbReference>
<dbReference type="NCBIfam" id="NF004740">
    <property type="entry name" value="PRK06076.1-1"/>
    <property type="match status" value="1"/>
</dbReference>
<dbReference type="NCBIfam" id="NF004741">
    <property type="entry name" value="PRK06076.1-2"/>
    <property type="match status" value="1"/>
</dbReference>
<dbReference type="PANTHER" id="PTHR11432">
    <property type="entry name" value="NADH DEHYDROGENASE SUBUNIT 1"/>
    <property type="match status" value="1"/>
</dbReference>
<dbReference type="PANTHER" id="PTHR11432:SF3">
    <property type="entry name" value="NADH-UBIQUINONE OXIDOREDUCTASE CHAIN 1"/>
    <property type="match status" value="1"/>
</dbReference>
<dbReference type="Pfam" id="PF00146">
    <property type="entry name" value="NADHdh"/>
    <property type="match status" value="1"/>
</dbReference>
<dbReference type="PROSITE" id="PS00667">
    <property type="entry name" value="COMPLEX1_ND1_1"/>
    <property type="match status" value="1"/>
</dbReference>
<dbReference type="PROSITE" id="PS00668">
    <property type="entry name" value="COMPLEX1_ND1_2"/>
    <property type="match status" value="1"/>
</dbReference>
<sequence>MSWLTPELTEILITVGKAIVILLVVVTCGAFMSMGERRLLGLFQGRYGPNRVGWGGSLQLVADMIKMFFKEDWVPNFTDKVIFTLAPMIAFTSMLIAFAIVPITPTWGVADLNIGILFFLMMAGLAVYAVLFAGWASNNKYSLLGAVRASAQTVSYEVFIGLSLMGVVAQAGSFNMRDIVDSQEHLWNVIPQFFGFITFAIAGVAVCHRHPFDQPEAEQEIADGYHIEYSGMKFGLFFVGEYIGIVTVSALMVTLFFGGWHGPILPPFVWFALKTGFFMMMFILIRASLPRPRYDQVMSFGWKVCLPITLLNLLATAAVILYNA</sequence>